<accession>O59832</accession>
<comment type="catalytic activity">
    <reaction evidence="1">
        <text>an L-aminoacyl-L-amino acid + H2O = 2 an L-alpha-amino acid</text>
        <dbReference type="Rhea" id="RHEA:48940"/>
        <dbReference type="ChEBI" id="CHEBI:15377"/>
        <dbReference type="ChEBI" id="CHEBI:59869"/>
        <dbReference type="ChEBI" id="CHEBI:77460"/>
        <dbReference type="EC" id="3.4.13.19"/>
    </reaction>
</comment>
<comment type="cofactor">
    <cofactor evidence="1">
        <name>Zn(2+)</name>
        <dbReference type="ChEBI" id="CHEBI:29105"/>
    </cofactor>
</comment>
<comment type="similarity">
    <text evidence="1">Belongs to the metallo-dependent hydrolases superfamily. Peptidase M19 family.</text>
</comment>
<organism>
    <name type="scientific">Schizosaccharomyces pombe (strain 972 / ATCC 24843)</name>
    <name type="common">Fission yeast</name>
    <dbReference type="NCBI Taxonomy" id="284812"/>
    <lineage>
        <taxon>Eukaryota</taxon>
        <taxon>Fungi</taxon>
        <taxon>Dikarya</taxon>
        <taxon>Ascomycota</taxon>
        <taxon>Taphrinomycotina</taxon>
        <taxon>Schizosaccharomycetes</taxon>
        <taxon>Schizosaccharomycetales</taxon>
        <taxon>Schizosaccharomycetaceae</taxon>
        <taxon>Schizosaccharomyces</taxon>
    </lineage>
</organism>
<gene>
    <name type="ORF">SPCC965.12</name>
</gene>
<name>DPEH2_SCHPO</name>
<keyword id="KW-0031">Aminopeptidase</keyword>
<keyword id="KW-0378">Hydrolase</keyword>
<keyword id="KW-0479">Metal-binding</keyword>
<keyword id="KW-0482">Metalloprotease</keyword>
<keyword id="KW-0645">Protease</keyword>
<keyword id="KW-1185">Reference proteome</keyword>
<keyword id="KW-0862">Zinc</keyword>
<reference key="1">
    <citation type="journal article" date="2002" name="Nature">
        <title>The genome sequence of Schizosaccharomyces pombe.</title>
        <authorList>
            <person name="Wood V."/>
            <person name="Gwilliam R."/>
            <person name="Rajandream M.A."/>
            <person name="Lyne M.H."/>
            <person name="Lyne R."/>
            <person name="Stewart A."/>
            <person name="Sgouros J.G."/>
            <person name="Peat N."/>
            <person name="Hayles J."/>
            <person name="Baker S.G."/>
            <person name="Basham D."/>
            <person name="Bowman S."/>
            <person name="Brooks K."/>
            <person name="Brown D."/>
            <person name="Brown S."/>
            <person name="Chillingworth T."/>
            <person name="Churcher C.M."/>
            <person name="Collins M."/>
            <person name="Connor R."/>
            <person name="Cronin A."/>
            <person name="Davis P."/>
            <person name="Feltwell T."/>
            <person name="Fraser A."/>
            <person name="Gentles S."/>
            <person name="Goble A."/>
            <person name="Hamlin N."/>
            <person name="Harris D.E."/>
            <person name="Hidalgo J."/>
            <person name="Hodgson G."/>
            <person name="Holroyd S."/>
            <person name="Hornsby T."/>
            <person name="Howarth S."/>
            <person name="Huckle E.J."/>
            <person name="Hunt S."/>
            <person name="Jagels K."/>
            <person name="James K.D."/>
            <person name="Jones L."/>
            <person name="Jones M."/>
            <person name="Leather S."/>
            <person name="McDonald S."/>
            <person name="McLean J."/>
            <person name="Mooney P."/>
            <person name="Moule S."/>
            <person name="Mungall K.L."/>
            <person name="Murphy L.D."/>
            <person name="Niblett D."/>
            <person name="Odell C."/>
            <person name="Oliver K."/>
            <person name="O'Neil S."/>
            <person name="Pearson D."/>
            <person name="Quail M.A."/>
            <person name="Rabbinowitsch E."/>
            <person name="Rutherford K.M."/>
            <person name="Rutter S."/>
            <person name="Saunders D."/>
            <person name="Seeger K."/>
            <person name="Sharp S."/>
            <person name="Skelton J."/>
            <person name="Simmonds M.N."/>
            <person name="Squares R."/>
            <person name="Squares S."/>
            <person name="Stevens K."/>
            <person name="Taylor K."/>
            <person name="Taylor R.G."/>
            <person name="Tivey A."/>
            <person name="Walsh S.V."/>
            <person name="Warren T."/>
            <person name="Whitehead S."/>
            <person name="Woodward J.R."/>
            <person name="Volckaert G."/>
            <person name="Aert R."/>
            <person name="Robben J."/>
            <person name="Grymonprez B."/>
            <person name="Weltjens I."/>
            <person name="Vanstreels E."/>
            <person name="Rieger M."/>
            <person name="Schaefer M."/>
            <person name="Mueller-Auer S."/>
            <person name="Gabel C."/>
            <person name="Fuchs M."/>
            <person name="Duesterhoeft A."/>
            <person name="Fritzc C."/>
            <person name="Holzer E."/>
            <person name="Moestl D."/>
            <person name="Hilbert H."/>
            <person name="Borzym K."/>
            <person name="Langer I."/>
            <person name="Beck A."/>
            <person name="Lehrach H."/>
            <person name="Reinhardt R."/>
            <person name="Pohl T.M."/>
            <person name="Eger P."/>
            <person name="Zimmermann W."/>
            <person name="Wedler H."/>
            <person name="Wambutt R."/>
            <person name="Purnelle B."/>
            <person name="Goffeau A."/>
            <person name="Cadieu E."/>
            <person name="Dreano S."/>
            <person name="Gloux S."/>
            <person name="Lelaure V."/>
            <person name="Mottier S."/>
            <person name="Galibert F."/>
            <person name="Aves S.J."/>
            <person name="Xiang Z."/>
            <person name="Hunt C."/>
            <person name="Moore K."/>
            <person name="Hurst S.M."/>
            <person name="Lucas M."/>
            <person name="Rochet M."/>
            <person name="Gaillardin C."/>
            <person name="Tallada V.A."/>
            <person name="Garzon A."/>
            <person name="Thode G."/>
            <person name="Daga R.R."/>
            <person name="Cruzado L."/>
            <person name="Jimenez J."/>
            <person name="Sanchez M."/>
            <person name="del Rey F."/>
            <person name="Benito J."/>
            <person name="Dominguez A."/>
            <person name="Revuelta J.L."/>
            <person name="Moreno S."/>
            <person name="Armstrong J."/>
            <person name="Forsburg S.L."/>
            <person name="Cerutti L."/>
            <person name="Lowe T."/>
            <person name="McCombie W.R."/>
            <person name="Paulsen I."/>
            <person name="Potashkin J."/>
            <person name="Shpakovski G.V."/>
            <person name="Ussery D."/>
            <person name="Barrell B.G."/>
            <person name="Nurse P."/>
        </authorList>
    </citation>
    <scope>NUCLEOTIDE SEQUENCE [LARGE SCALE GENOMIC DNA]</scope>
    <source>
        <strain>972 / ATCC 24843</strain>
    </source>
</reference>
<dbReference type="EC" id="3.4.13.19" evidence="1"/>
<dbReference type="EMBL" id="CU329672">
    <property type="protein sequence ID" value="CAA19072.1"/>
    <property type="molecule type" value="Genomic_DNA"/>
</dbReference>
<dbReference type="RefSeq" id="NP_588522.1">
    <property type="nucleotide sequence ID" value="NM_001023511.2"/>
</dbReference>
<dbReference type="SMR" id="O59832"/>
<dbReference type="BioGRID" id="275679">
    <property type="interactions" value="1"/>
</dbReference>
<dbReference type="STRING" id="284812.O59832"/>
<dbReference type="PaxDb" id="4896-SPCC965.12.1"/>
<dbReference type="EnsemblFungi" id="SPCC965.12.1">
    <property type="protein sequence ID" value="SPCC965.12.1:pep"/>
    <property type="gene ID" value="SPCC965.12"/>
</dbReference>
<dbReference type="PomBase" id="SPCC965.12"/>
<dbReference type="VEuPathDB" id="FungiDB:SPCC965.12"/>
<dbReference type="eggNOG" id="KOG4127">
    <property type="taxonomic scope" value="Eukaryota"/>
</dbReference>
<dbReference type="HOGENOM" id="CLU_031404_4_2_1"/>
<dbReference type="InParanoid" id="O59832"/>
<dbReference type="OMA" id="HIWHVAQ"/>
<dbReference type="PhylomeDB" id="O59832"/>
<dbReference type="Reactome" id="R-SPO-2142691">
    <property type="pathway name" value="Synthesis of Leukotrienes (LT) and Eoxins (EX)"/>
</dbReference>
<dbReference type="Reactome" id="R-SPO-5423646">
    <property type="pathway name" value="Aflatoxin activation and detoxification"/>
</dbReference>
<dbReference type="PRO" id="PR:O59832"/>
<dbReference type="Proteomes" id="UP000002485">
    <property type="component" value="Chromosome III"/>
</dbReference>
<dbReference type="GO" id="GO:0005829">
    <property type="term" value="C:cytosol"/>
    <property type="evidence" value="ECO:0007005"/>
    <property type="project" value="PomBase"/>
</dbReference>
<dbReference type="GO" id="GO:0005634">
    <property type="term" value="C:nucleus"/>
    <property type="evidence" value="ECO:0007005"/>
    <property type="project" value="PomBase"/>
</dbReference>
<dbReference type="GO" id="GO:0004177">
    <property type="term" value="F:aminopeptidase activity"/>
    <property type="evidence" value="ECO:0007669"/>
    <property type="project" value="UniProtKB-KW"/>
</dbReference>
<dbReference type="GO" id="GO:0046872">
    <property type="term" value="F:metal ion binding"/>
    <property type="evidence" value="ECO:0007669"/>
    <property type="project" value="UniProtKB-KW"/>
</dbReference>
<dbReference type="GO" id="GO:0070573">
    <property type="term" value="F:metallodipeptidase activity"/>
    <property type="evidence" value="ECO:0000250"/>
    <property type="project" value="PomBase"/>
</dbReference>
<dbReference type="GO" id="GO:0006508">
    <property type="term" value="P:proteolysis"/>
    <property type="evidence" value="ECO:0007669"/>
    <property type="project" value="UniProtKB-KW"/>
</dbReference>
<dbReference type="CDD" id="cd01301">
    <property type="entry name" value="rDP_like"/>
    <property type="match status" value="1"/>
</dbReference>
<dbReference type="FunFam" id="3.20.20.140:FF:000030">
    <property type="entry name" value="Dipeptidase"/>
    <property type="match status" value="1"/>
</dbReference>
<dbReference type="Gene3D" id="3.20.20.140">
    <property type="entry name" value="Metal-dependent hydrolases"/>
    <property type="match status" value="1"/>
</dbReference>
<dbReference type="InterPro" id="IPR032466">
    <property type="entry name" value="Metal_Hydrolase"/>
</dbReference>
<dbReference type="InterPro" id="IPR008257">
    <property type="entry name" value="Pept_M19"/>
</dbReference>
<dbReference type="PANTHER" id="PTHR10443:SF12">
    <property type="entry name" value="DIPEPTIDASE"/>
    <property type="match status" value="1"/>
</dbReference>
<dbReference type="PANTHER" id="PTHR10443">
    <property type="entry name" value="MICROSOMAL DIPEPTIDASE"/>
    <property type="match status" value="1"/>
</dbReference>
<dbReference type="Pfam" id="PF01244">
    <property type="entry name" value="Peptidase_M19"/>
    <property type="match status" value="1"/>
</dbReference>
<dbReference type="SUPFAM" id="SSF51556">
    <property type="entry name" value="Metallo-dependent hydrolases"/>
    <property type="match status" value="1"/>
</dbReference>
<dbReference type="PROSITE" id="PS51365">
    <property type="entry name" value="RENAL_DIPEPTIDASE_2"/>
    <property type="match status" value="1"/>
</dbReference>
<sequence length="416" mass="47421">MTVDLREEKELAQQRFKEICKHAKIVDTHNDFPYLLRVQLRNKLQLAEFDFENGLTSHTDLVKMRQGQVGVQFFSCFIECKNPNYLYQDFDTPTTVVRDTLEQIDVTRRLVCKYNNDLKFVDCADDAIAAFRNNGKIAIALGVEGLHQVDTSLAVLRQYYSLGVRYITLTHNCDNPFATAASSITGGLPDRGLSAYGIECIFEMNRLGMMVDLSHVSHRTMHDALDVTKAPVIFSHSSAYTLTEHERNVRDDVLERLKTNGGVVQVNFYQDFIRKPGSDRATIDDAADHILHIIKVAGWEHVGLGSDFDGIPQGPKGLEDVSKYPDLICKIIERTNATNEQIEGLMGLNVLRVWKKTELVALQLSKKLEPIESSWSGRKWEFYSYAKEFPELFPDAYKLNEKSTVWNYDQPLNIEK</sequence>
<evidence type="ECO:0000255" key="1">
    <source>
        <dbReference type="PROSITE-ProRule" id="PRU10073"/>
    </source>
</evidence>
<proteinExistence type="inferred from homology"/>
<protein>
    <recommendedName>
        <fullName>Uncharacterized dipeptidase C965.12</fullName>
        <ecNumber evidence="1">3.4.13.19</ecNumber>
    </recommendedName>
</protein>
<feature type="chain" id="PRO_0000314655" description="Uncharacterized dipeptidase C965.12">
    <location>
        <begin position="1"/>
        <end position="416"/>
    </location>
</feature>
<feature type="binding site" evidence="1">
    <location>
        <position position="29"/>
    </location>
    <ligand>
        <name>Zn(2+)</name>
        <dbReference type="ChEBI" id="CHEBI:29105"/>
        <label>1</label>
        <note>catalytic</note>
    </ligand>
</feature>
<feature type="binding site" evidence="1">
    <location>
        <position position="31"/>
    </location>
    <ligand>
        <name>Zn(2+)</name>
        <dbReference type="ChEBI" id="CHEBI:29105"/>
        <label>1</label>
        <note>catalytic</note>
    </ligand>
</feature>
<feature type="binding site" evidence="1">
    <location>
        <position position="144"/>
    </location>
    <ligand>
        <name>Zn(2+)</name>
        <dbReference type="ChEBI" id="CHEBI:29105"/>
        <label>1</label>
        <note>catalytic</note>
    </ligand>
</feature>
<feature type="binding site" evidence="1">
    <location>
        <position position="144"/>
    </location>
    <ligand>
        <name>Zn(2+)</name>
        <dbReference type="ChEBI" id="CHEBI:29105"/>
        <label>2</label>
        <note>catalytic</note>
    </ligand>
</feature>
<feature type="binding site" evidence="1">
    <location>
        <position position="215"/>
    </location>
    <ligand>
        <name>Zn(2+)</name>
        <dbReference type="ChEBI" id="CHEBI:29105"/>
        <label>2</label>
        <note>catalytic</note>
    </ligand>
</feature>
<feature type="binding site" evidence="1">
    <location>
        <position position="236"/>
    </location>
    <ligand>
        <name>Zn(2+)</name>
        <dbReference type="ChEBI" id="CHEBI:29105"/>
        <label>2</label>
        <note>catalytic</note>
    </ligand>
</feature>